<keyword id="KW-0378">Hydrolase</keyword>
<keyword id="KW-0479">Metal-binding</keyword>
<keyword id="KW-0862">Zinc</keyword>
<proteinExistence type="inferred from homology"/>
<comment type="function">
    <text evidence="1">Thiolesterase that catalyzes the hydrolysis of S-D-lactoyl-glutathione to form glutathione and D-lactic acid.</text>
</comment>
<comment type="catalytic activity">
    <reaction evidence="1">
        <text>an S-(2-hydroxyacyl)glutathione + H2O = a 2-hydroxy carboxylate + glutathione + H(+)</text>
        <dbReference type="Rhea" id="RHEA:21864"/>
        <dbReference type="ChEBI" id="CHEBI:15377"/>
        <dbReference type="ChEBI" id="CHEBI:15378"/>
        <dbReference type="ChEBI" id="CHEBI:57925"/>
        <dbReference type="ChEBI" id="CHEBI:58896"/>
        <dbReference type="ChEBI" id="CHEBI:71261"/>
        <dbReference type="EC" id="3.1.2.6"/>
    </reaction>
</comment>
<comment type="cofactor">
    <cofactor evidence="1">
        <name>Zn(2+)</name>
        <dbReference type="ChEBI" id="CHEBI:29105"/>
    </cofactor>
    <text evidence="1">Binds 2 Zn(2+) ions per subunit.</text>
</comment>
<comment type="pathway">
    <text evidence="1">Secondary metabolite metabolism; methylglyoxal degradation; (R)-lactate from methylglyoxal: step 2/2.</text>
</comment>
<comment type="subunit">
    <text evidence="1">Monomer.</text>
</comment>
<comment type="similarity">
    <text evidence="1">Belongs to the metallo-beta-lactamase superfamily. Glyoxalase II family.</text>
</comment>
<evidence type="ECO:0000255" key="1">
    <source>
        <dbReference type="HAMAP-Rule" id="MF_01374"/>
    </source>
</evidence>
<protein>
    <recommendedName>
        <fullName evidence="1">Hydroxyacylglutathione hydrolase</fullName>
        <ecNumber evidence="1">3.1.2.6</ecNumber>
    </recommendedName>
    <alternativeName>
        <fullName evidence="1">Glyoxalase II</fullName>
        <shortName evidence="1">Glx II</shortName>
    </alternativeName>
</protein>
<name>GLO2_XYLFA</name>
<dbReference type="EC" id="3.1.2.6" evidence="1"/>
<dbReference type="EMBL" id="AE003849">
    <property type="protein sequence ID" value="AAF84959.1"/>
    <property type="molecule type" value="Genomic_DNA"/>
</dbReference>
<dbReference type="PIR" id="H82591">
    <property type="entry name" value="H82591"/>
</dbReference>
<dbReference type="RefSeq" id="WP_010894609.1">
    <property type="nucleotide sequence ID" value="NC_002488.3"/>
</dbReference>
<dbReference type="SMR" id="Q9PBI4"/>
<dbReference type="STRING" id="160492.XF_2160"/>
<dbReference type="KEGG" id="xfa:XF_2160"/>
<dbReference type="eggNOG" id="COG0491">
    <property type="taxonomic scope" value="Bacteria"/>
</dbReference>
<dbReference type="HOGENOM" id="CLU_030571_4_1_6"/>
<dbReference type="UniPathway" id="UPA00619">
    <property type="reaction ID" value="UER00676"/>
</dbReference>
<dbReference type="Proteomes" id="UP000000812">
    <property type="component" value="Chromosome"/>
</dbReference>
<dbReference type="GO" id="GO:0004416">
    <property type="term" value="F:hydroxyacylglutathione hydrolase activity"/>
    <property type="evidence" value="ECO:0007669"/>
    <property type="project" value="UniProtKB-UniRule"/>
</dbReference>
<dbReference type="GO" id="GO:0046872">
    <property type="term" value="F:metal ion binding"/>
    <property type="evidence" value="ECO:0007669"/>
    <property type="project" value="UniProtKB-KW"/>
</dbReference>
<dbReference type="GO" id="GO:0019243">
    <property type="term" value="P:methylglyoxal catabolic process to D-lactate via S-lactoyl-glutathione"/>
    <property type="evidence" value="ECO:0007669"/>
    <property type="project" value="InterPro"/>
</dbReference>
<dbReference type="CDD" id="cd07723">
    <property type="entry name" value="hydroxyacylglutathione_hydrolase_MBL-fold"/>
    <property type="match status" value="1"/>
</dbReference>
<dbReference type="Gene3D" id="3.60.15.10">
    <property type="entry name" value="Ribonuclease Z/Hydroxyacylglutathione hydrolase-like"/>
    <property type="match status" value="1"/>
</dbReference>
<dbReference type="HAMAP" id="MF_01374">
    <property type="entry name" value="Glyoxalase_2"/>
    <property type="match status" value="1"/>
</dbReference>
<dbReference type="InterPro" id="IPR035680">
    <property type="entry name" value="Clx_II_MBL"/>
</dbReference>
<dbReference type="InterPro" id="IPR050110">
    <property type="entry name" value="Glyoxalase_II_hydrolase"/>
</dbReference>
<dbReference type="InterPro" id="IPR032282">
    <property type="entry name" value="HAGH_C"/>
</dbReference>
<dbReference type="InterPro" id="IPR017782">
    <property type="entry name" value="Hydroxyacylglutathione_Hdrlase"/>
</dbReference>
<dbReference type="InterPro" id="IPR001279">
    <property type="entry name" value="Metallo-B-lactamas"/>
</dbReference>
<dbReference type="InterPro" id="IPR036866">
    <property type="entry name" value="RibonucZ/Hydroxyglut_hydro"/>
</dbReference>
<dbReference type="NCBIfam" id="TIGR03413">
    <property type="entry name" value="GSH_gloB"/>
    <property type="match status" value="1"/>
</dbReference>
<dbReference type="PANTHER" id="PTHR43705">
    <property type="entry name" value="HYDROXYACYLGLUTATHIONE HYDROLASE"/>
    <property type="match status" value="1"/>
</dbReference>
<dbReference type="PANTHER" id="PTHR43705:SF1">
    <property type="entry name" value="HYDROXYACYLGLUTATHIONE HYDROLASE GLOB"/>
    <property type="match status" value="1"/>
</dbReference>
<dbReference type="Pfam" id="PF16123">
    <property type="entry name" value="HAGH_C"/>
    <property type="match status" value="1"/>
</dbReference>
<dbReference type="Pfam" id="PF00753">
    <property type="entry name" value="Lactamase_B"/>
    <property type="match status" value="1"/>
</dbReference>
<dbReference type="PIRSF" id="PIRSF005457">
    <property type="entry name" value="Glx"/>
    <property type="match status" value="1"/>
</dbReference>
<dbReference type="SMART" id="SM00849">
    <property type="entry name" value="Lactamase_B"/>
    <property type="match status" value="1"/>
</dbReference>
<dbReference type="SUPFAM" id="SSF56281">
    <property type="entry name" value="Metallo-hydrolase/oxidoreductase"/>
    <property type="match status" value="1"/>
</dbReference>
<organism>
    <name type="scientific">Xylella fastidiosa (strain 9a5c)</name>
    <dbReference type="NCBI Taxonomy" id="160492"/>
    <lineage>
        <taxon>Bacteria</taxon>
        <taxon>Pseudomonadati</taxon>
        <taxon>Pseudomonadota</taxon>
        <taxon>Gammaproteobacteria</taxon>
        <taxon>Lysobacterales</taxon>
        <taxon>Lysobacteraceae</taxon>
        <taxon>Xylella</taxon>
    </lineage>
</organism>
<feature type="chain" id="PRO_1000068234" description="Hydroxyacylglutathione hydrolase">
    <location>
        <begin position="1"/>
        <end position="258"/>
    </location>
</feature>
<feature type="binding site" evidence="1">
    <location>
        <position position="52"/>
    </location>
    <ligand>
        <name>Zn(2+)</name>
        <dbReference type="ChEBI" id="CHEBI:29105"/>
        <label>1</label>
    </ligand>
</feature>
<feature type="binding site" evidence="1">
    <location>
        <position position="54"/>
    </location>
    <ligand>
        <name>Zn(2+)</name>
        <dbReference type="ChEBI" id="CHEBI:29105"/>
        <label>1</label>
    </ligand>
</feature>
<feature type="binding site" evidence="1">
    <location>
        <position position="56"/>
    </location>
    <ligand>
        <name>Zn(2+)</name>
        <dbReference type="ChEBI" id="CHEBI:29105"/>
        <label>2</label>
    </ligand>
</feature>
<feature type="binding site" evidence="1">
    <location>
        <position position="57"/>
    </location>
    <ligand>
        <name>Zn(2+)</name>
        <dbReference type="ChEBI" id="CHEBI:29105"/>
        <label>2</label>
    </ligand>
</feature>
<feature type="binding site" evidence="1">
    <location>
        <position position="109"/>
    </location>
    <ligand>
        <name>Zn(2+)</name>
        <dbReference type="ChEBI" id="CHEBI:29105"/>
        <label>1</label>
    </ligand>
</feature>
<feature type="binding site" evidence="1">
    <location>
        <position position="126"/>
    </location>
    <ligand>
        <name>Zn(2+)</name>
        <dbReference type="ChEBI" id="CHEBI:29105"/>
        <label>1</label>
    </ligand>
</feature>
<feature type="binding site" evidence="1">
    <location>
        <position position="126"/>
    </location>
    <ligand>
        <name>Zn(2+)</name>
        <dbReference type="ChEBI" id="CHEBI:29105"/>
        <label>2</label>
    </ligand>
</feature>
<feature type="binding site" evidence="1">
    <location>
        <position position="164"/>
    </location>
    <ligand>
        <name>Zn(2+)</name>
        <dbReference type="ChEBI" id="CHEBI:29105"/>
        <label>2</label>
    </ligand>
</feature>
<accession>Q9PBI4</accession>
<gene>
    <name evidence="1" type="primary">gloB</name>
    <name type="ordered locus">XF_2160</name>
</gene>
<sequence>MRLTPLPAFDNNYIWTLIAPDGRAIIVDPGQALPILEAHSKGLIPTAILLTHHHADHIGGVPELLERWPTLPIYAPHDTRIALNYHRIGEGDSLNILGLRFQVIHTPGHTHSHLTFIGNDLLFCGDTLFSLGCGQIFEGTPTQMLASLQRLAALPIQTRVCCGHEYTLSNAAFALHVDPTNTALQKRRQQANAMRLANLPTLPISLESELNTNPFLRTAAPTIHAATATHLQRTPIDEVEVFATLRHWKNNFPIKNIP</sequence>
<reference key="1">
    <citation type="journal article" date="2000" name="Nature">
        <title>The genome sequence of the plant pathogen Xylella fastidiosa.</title>
        <authorList>
            <person name="Simpson A.J.G."/>
            <person name="Reinach F.C."/>
            <person name="Arruda P."/>
            <person name="Abreu F.A."/>
            <person name="Acencio M."/>
            <person name="Alvarenga R."/>
            <person name="Alves L.M.C."/>
            <person name="Araya J.E."/>
            <person name="Baia G.S."/>
            <person name="Baptista C.S."/>
            <person name="Barros M.H."/>
            <person name="Bonaccorsi E.D."/>
            <person name="Bordin S."/>
            <person name="Bove J.M."/>
            <person name="Briones M.R.S."/>
            <person name="Bueno M.R.P."/>
            <person name="Camargo A.A."/>
            <person name="Camargo L.E.A."/>
            <person name="Carraro D.M."/>
            <person name="Carrer H."/>
            <person name="Colauto N.B."/>
            <person name="Colombo C."/>
            <person name="Costa F.F."/>
            <person name="Costa M.C.R."/>
            <person name="Costa-Neto C.M."/>
            <person name="Coutinho L.L."/>
            <person name="Cristofani M."/>
            <person name="Dias-Neto E."/>
            <person name="Docena C."/>
            <person name="El-Dorry H."/>
            <person name="Facincani A.P."/>
            <person name="Ferreira A.J.S."/>
            <person name="Ferreira V.C.A."/>
            <person name="Ferro J.A."/>
            <person name="Fraga J.S."/>
            <person name="Franca S.C."/>
            <person name="Franco M.C."/>
            <person name="Frohme M."/>
            <person name="Furlan L.R."/>
            <person name="Garnier M."/>
            <person name="Goldman G.H."/>
            <person name="Goldman M.H.S."/>
            <person name="Gomes S.L."/>
            <person name="Gruber A."/>
            <person name="Ho P.L."/>
            <person name="Hoheisel J.D."/>
            <person name="Junqueira M.L."/>
            <person name="Kemper E.L."/>
            <person name="Kitajima J.P."/>
            <person name="Krieger J.E."/>
            <person name="Kuramae E.E."/>
            <person name="Laigret F."/>
            <person name="Lambais M.R."/>
            <person name="Leite L.C.C."/>
            <person name="Lemos E.G.M."/>
            <person name="Lemos M.V.F."/>
            <person name="Lopes S.A."/>
            <person name="Lopes C.R."/>
            <person name="Machado J.A."/>
            <person name="Machado M.A."/>
            <person name="Madeira A.M.B.N."/>
            <person name="Madeira H.M.F."/>
            <person name="Marino C.L."/>
            <person name="Marques M.V."/>
            <person name="Martins E.A.L."/>
            <person name="Martins E.M.F."/>
            <person name="Matsukuma A.Y."/>
            <person name="Menck C.F.M."/>
            <person name="Miracca E.C."/>
            <person name="Miyaki C.Y."/>
            <person name="Monteiro-Vitorello C.B."/>
            <person name="Moon D.H."/>
            <person name="Nagai M.A."/>
            <person name="Nascimento A.L.T.O."/>
            <person name="Netto L.E.S."/>
            <person name="Nhani A. Jr."/>
            <person name="Nobrega F.G."/>
            <person name="Nunes L.R."/>
            <person name="Oliveira M.A."/>
            <person name="de Oliveira M.C."/>
            <person name="de Oliveira R.C."/>
            <person name="Palmieri D.A."/>
            <person name="Paris A."/>
            <person name="Peixoto B.R."/>
            <person name="Pereira G.A.G."/>
            <person name="Pereira H.A. Jr."/>
            <person name="Pesquero J.B."/>
            <person name="Quaggio R.B."/>
            <person name="Roberto P.G."/>
            <person name="Rodrigues V."/>
            <person name="de Rosa A.J.M."/>
            <person name="de Rosa V.E. Jr."/>
            <person name="de Sa R.G."/>
            <person name="Santelli R.V."/>
            <person name="Sawasaki H.E."/>
            <person name="da Silva A.C.R."/>
            <person name="da Silva A.M."/>
            <person name="da Silva F.R."/>
            <person name="Silva W.A. Jr."/>
            <person name="da Silveira J.F."/>
            <person name="Silvestri M.L.Z."/>
            <person name="Siqueira W.J."/>
            <person name="de Souza A.A."/>
            <person name="de Souza A.P."/>
            <person name="Terenzi M.F."/>
            <person name="Truffi D."/>
            <person name="Tsai S.M."/>
            <person name="Tsuhako M.H."/>
            <person name="Vallada H."/>
            <person name="Van Sluys M.A."/>
            <person name="Verjovski-Almeida S."/>
            <person name="Vettore A.L."/>
            <person name="Zago M.A."/>
            <person name="Zatz M."/>
            <person name="Meidanis J."/>
            <person name="Setubal J.C."/>
        </authorList>
    </citation>
    <scope>NUCLEOTIDE SEQUENCE [LARGE SCALE GENOMIC DNA]</scope>
    <source>
        <strain>9a5c</strain>
    </source>
</reference>